<organism>
    <name type="scientific">Buchnera aphidicola subsp. Acyrthosiphon pisum (strain APS)</name>
    <name type="common">Acyrthosiphon pisum symbiotic bacterium</name>
    <dbReference type="NCBI Taxonomy" id="107806"/>
    <lineage>
        <taxon>Bacteria</taxon>
        <taxon>Pseudomonadati</taxon>
        <taxon>Pseudomonadota</taxon>
        <taxon>Gammaproteobacteria</taxon>
        <taxon>Enterobacterales</taxon>
        <taxon>Erwiniaceae</taxon>
        <taxon>Buchnera</taxon>
    </lineage>
</organism>
<dbReference type="EC" id="4.1.1.48"/>
<dbReference type="EC" id="5.3.1.24"/>
<dbReference type="EMBL" id="BA000003">
    <property type="protein sequence ID" value="BAB12989.1"/>
    <property type="molecule type" value="Genomic_DNA"/>
</dbReference>
<dbReference type="RefSeq" id="NP_240103.1">
    <property type="nucleotide sequence ID" value="NC_002528.1"/>
</dbReference>
<dbReference type="RefSeq" id="WP_010896042.1">
    <property type="nucleotide sequence ID" value="NC_002528.1"/>
</dbReference>
<dbReference type="SMR" id="P57366"/>
<dbReference type="STRING" id="563178.BUAP5A_274"/>
<dbReference type="EnsemblBacteria" id="BAB12989">
    <property type="protein sequence ID" value="BAB12989"/>
    <property type="gene ID" value="BAB12989"/>
</dbReference>
<dbReference type="KEGG" id="buc:BU279"/>
<dbReference type="PATRIC" id="fig|107806.10.peg.289"/>
<dbReference type="eggNOG" id="COG0134">
    <property type="taxonomic scope" value="Bacteria"/>
</dbReference>
<dbReference type="eggNOG" id="COG0135">
    <property type="taxonomic scope" value="Bacteria"/>
</dbReference>
<dbReference type="HOGENOM" id="CLU_007713_3_1_6"/>
<dbReference type="UniPathway" id="UPA00035">
    <property type="reaction ID" value="UER00042"/>
</dbReference>
<dbReference type="UniPathway" id="UPA00035">
    <property type="reaction ID" value="UER00043"/>
</dbReference>
<dbReference type="Proteomes" id="UP000001806">
    <property type="component" value="Chromosome"/>
</dbReference>
<dbReference type="GO" id="GO:0004425">
    <property type="term" value="F:indole-3-glycerol-phosphate synthase activity"/>
    <property type="evidence" value="ECO:0007669"/>
    <property type="project" value="UniProtKB-UniRule"/>
</dbReference>
<dbReference type="GO" id="GO:0004640">
    <property type="term" value="F:phosphoribosylanthranilate isomerase activity"/>
    <property type="evidence" value="ECO:0007669"/>
    <property type="project" value="UniProtKB-UniRule"/>
</dbReference>
<dbReference type="GO" id="GO:0000162">
    <property type="term" value="P:L-tryptophan biosynthetic process"/>
    <property type="evidence" value="ECO:0007669"/>
    <property type="project" value="UniProtKB-UniRule"/>
</dbReference>
<dbReference type="CDD" id="cd00331">
    <property type="entry name" value="IGPS"/>
    <property type="match status" value="1"/>
</dbReference>
<dbReference type="CDD" id="cd00405">
    <property type="entry name" value="PRAI"/>
    <property type="match status" value="1"/>
</dbReference>
<dbReference type="FunFam" id="3.20.20.70:FF:000024">
    <property type="entry name" value="Indole-3-glycerol phosphate synthase"/>
    <property type="match status" value="1"/>
</dbReference>
<dbReference type="Gene3D" id="3.20.20.70">
    <property type="entry name" value="Aldolase class I"/>
    <property type="match status" value="2"/>
</dbReference>
<dbReference type="HAMAP" id="MF_00134_B">
    <property type="entry name" value="IGPS_B"/>
    <property type="match status" value="1"/>
</dbReference>
<dbReference type="HAMAP" id="MF_00135">
    <property type="entry name" value="PRAI"/>
    <property type="match status" value="1"/>
</dbReference>
<dbReference type="InterPro" id="IPR013785">
    <property type="entry name" value="Aldolase_TIM"/>
</dbReference>
<dbReference type="InterPro" id="IPR045186">
    <property type="entry name" value="Indole-3-glycerol_P_synth"/>
</dbReference>
<dbReference type="InterPro" id="IPR013798">
    <property type="entry name" value="Indole-3-glycerol_P_synth_dom"/>
</dbReference>
<dbReference type="InterPro" id="IPR001468">
    <property type="entry name" value="Indole-3-GlycerolPSynthase_CS"/>
</dbReference>
<dbReference type="InterPro" id="IPR001240">
    <property type="entry name" value="PRAI_dom"/>
</dbReference>
<dbReference type="InterPro" id="IPR011060">
    <property type="entry name" value="RibuloseP-bd_barrel"/>
</dbReference>
<dbReference type="NCBIfam" id="NF006945">
    <property type="entry name" value="PRK09427.1"/>
    <property type="match status" value="1"/>
</dbReference>
<dbReference type="PANTHER" id="PTHR22854:SF2">
    <property type="entry name" value="INDOLE-3-GLYCEROL-PHOSPHATE SYNTHASE"/>
    <property type="match status" value="1"/>
</dbReference>
<dbReference type="PANTHER" id="PTHR22854">
    <property type="entry name" value="TRYPTOPHAN BIOSYNTHESIS PROTEIN"/>
    <property type="match status" value="1"/>
</dbReference>
<dbReference type="Pfam" id="PF00218">
    <property type="entry name" value="IGPS"/>
    <property type="match status" value="1"/>
</dbReference>
<dbReference type="Pfam" id="PF00697">
    <property type="entry name" value="PRAI"/>
    <property type="match status" value="1"/>
</dbReference>
<dbReference type="SUPFAM" id="SSF51366">
    <property type="entry name" value="Ribulose-phoshate binding barrel"/>
    <property type="match status" value="2"/>
</dbReference>
<dbReference type="PROSITE" id="PS00614">
    <property type="entry name" value="IGPS"/>
    <property type="match status" value="1"/>
</dbReference>
<keyword id="KW-0028">Amino-acid biosynthesis</keyword>
<keyword id="KW-0057">Aromatic amino acid biosynthesis</keyword>
<keyword id="KW-0210">Decarboxylase</keyword>
<keyword id="KW-0413">Isomerase</keyword>
<keyword id="KW-0456">Lyase</keyword>
<keyword id="KW-0511">Multifunctional enzyme</keyword>
<keyword id="KW-1185">Reference proteome</keyword>
<keyword id="KW-0822">Tryptophan biosynthesis</keyword>
<name>TRPC_BUCAI</name>
<reference key="1">
    <citation type="journal article" date="2000" name="Nature">
        <title>Genome sequence of the endocellular bacterial symbiont of aphids Buchnera sp. APS.</title>
        <authorList>
            <person name="Shigenobu S."/>
            <person name="Watanabe H."/>
            <person name="Hattori M."/>
            <person name="Sakaki Y."/>
            <person name="Ishikawa H."/>
        </authorList>
    </citation>
    <scope>NUCLEOTIDE SEQUENCE [LARGE SCALE GENOMIC DNA]</scope>
    <source>
        <strain>APS</strain>
    </source>
</reference>
<feature type="chain" id="PRO_0000154271" description="Tryptophan biosynthesis protein TrpCF">
    <location>
        <begin position="1"/>
        <end position="453"/>
    </location>
</feature>
<feature type="region of interest" description="Indole-3-glycerol phosphate synthase">
    <location>
        <begin position="1"/>
        <end position="257"/>
    </location>
</feature>
<feature type="region of interest" description="N-(5'-phosphoribosyl)anthranilate isomerase">
    <location>
        <begin position="258"/>
        <end position="453"/>
    </location>
</feature>
<gene>
    <name type="primary">trpC</name>
    <name type="synonym">trpC/F</name>
    <name type="ordered locus">BU279</name>
</gene>
<comment type="function">
    <text evidence="1">Bifunctional enzyme that catalyzes two sequential steps of tryptophan biosynthetic pathway. The first reaction is catalyzed by the isomerase, coded by the TrpF domain; the second reaction is catalyzed by the synthase, coded by the TrpC domain (By similarity).</text>
</comment>
<comment type="catalytic activity">
    <reaction>
        <text>N-(5-phospho-beta-D-ribosyl)anthranilate = 1-(2-carboxyphenylamino)-1-deoxy-D-ribulose 5-phosphate</text>
        <dbReference type="Rhea" id="RHEA:21540"/>
        <dbReference type="ChEBI" id="CHEBI:18277"/>
        <dbReference type="ChEBI" id="CHEBI:58613"/>
        <dbReference type="EC" id="5.3.1.24"/>
    </reaction>
</comment>
<comment type="catalytic activity">
    <reaction>
        <text>1-(2-carboxyphenylamino)-1-deoxy-D-ribulose 5-phosphate + H(+) = (1S,2R)-1-C-(indol-3-yl)glycerol 3-phosphate + CO2 + H2O</text>
        <dbReference type="Rhea" id="RHEA:23476"/>
        <dbReference type="ChEBI" id="CHEBI:15377"/>
        <dbReference type="ChEBI" id="CHEBI:15378"/>
        <dbReference type="ChEBI" id="CHEBI:16526"/>
        <dbReference type="ChEBI" id="CHEBI:58613"/>
        <dbReference type="ChEBI" id="CHEBI:58866"/>
        <dbReference type="EC" id="4.1.1.48"/>
    </reaction>
</comment>
<comment type="pathway">
    <text>Amino-acid biosynthesis; L-tryptophan biosynthesis; L-tryptophan from chorismate: step 3/5.</text>
</comment>
<comment type="pathway">
    <text>Amino-acid biosynthesis; L-tryptophan biosynthesis; L-tryptophan from chorismate: step 4/5.</text>
</comment>
<comment type="subunit">
    <text evidence="1">Monomer.</text>
</comment>
<comment type="similarity">
    <text evidence="2">In the N-terminal section; belongs to the TrpC family.</text>
</comment>
<comment type="similarity">
    <text evidence="2">In the C-terminal section; belongs to the TrpF family.</text>
</comment>
<protein>
    <recommendedName>
        <fullName>Tryptophan biosynthesis protein TrpCF</fullName>
    </recommendedName>
    <domain>
        <recommendedName>
            <fullName>Indole-3-glycerol phosphate synthase</fullName>
            <shortName>IGPS</shortName>
            <ecNumber>4.1.1.48</ecNumber>
        </recommendedName>
    </domain>
    <domain>
        <recommendedName>
            <fullName>N-(5'-phospho-ribosyl)anthranilate isomerase</fullName>
            <shortName>PRAI</shortName>
            <ecNumber>5.3.1.24</ecNumber>
        </recommendedName>
    </domain>
</protein>
<proteinExistence type="inferred from homology"/>
<sequence length="453" mass="52065">MQDTTLKKIIQDKSEWIRLRKEKQPLIDFKDKINKKTRDFYHSLKEKKPCFILEYKKKSPSLGIIRNNFNLIEISNVYKKYASSVSVLTDEKYFHGNLNFINIVRECVSQPVLCKDFFIDPYQVYLSRYYNADAILLMLSVLNDIQYKELSIIAKKLNMGILTEVNNIEELKRALKLNANIIGINNRNLHDLSIDLNRTRTLSSLIKKDTIIISESGIKKYREIKELSKFVNGFLIGSHLMSQTNLETAVRSIIFGDNKVCGLTRSIDIEVSEKYGAIYGGLIFVKNSPRYITKKTAKNISINRKLKLIGIFQNENINIIVDIAEELSLYGVQLHGQENKQYIDKLRNILPKKINIWKAFSIQSELPDRNWDNVNMYIFDSDSGGSNTSFNWSILNHHILDNVILAGGINLKNCITASKLKCSGLDLNSGVEISPGIKDYKKIKSIFQKLRYG</sequence>
<evidence type="ECO:0000250" key="1"/>
<evidence type="ECO:0000305" key="2"/>
<accession>P57366</accession>